<name>PLCG1_RAT</name>
<evidence type="ECO:0000250" key="1">
    <source>
        <dbReference type="UniProtKB" id="P08487"/>
    </source>
</evidence>
<evidence type="ECO:0000250" key="2">
    <source>
        <dbReference type="UniProtKB" id="P19174"/>
    </source>
</evidence>
<evidence type="ECO:0000250" key="3">
    <source>
        <dbReference type="UniProtKB" id="Q62077"/>
    </source>
</evidence>
<evidence type="ECO:0000255" key="4">
    <source>
        <dbReference type="PROSITE-ProRule" id="PRU00041"/>
    </source>
</evidence>
<evidence type="ECO:0000255" key="5">
    <source>
        <dbReference type="PROSITE-ProRule" id="PRU00145"/>
    </source>
</evidence>
<evidence type="ECO:0000255" key="6">
    <source>
        <dbReference type="PROSITE-ProRule" id="PRU00191"/>
    </source>
</evidence>
<evidence type="ECO:0000255" key="7">
    <source>
        <dbReference type="PROSITE-ProRule" id="PRU00192"/>
    </source>
</evidence>
<evidence type="ECO:0000255" key="8">
    <source>
        <dbReference type="PROSITE-ProRule" id="PRU00270"/>
    </source>
</evidence>
<evidence type="ECO:0000255" key="9">
    <source>
        <dbReference type="PROSITE-ProRule" id="PRU00271"/>
    </source>
</evidence>
<evidence type="ECO:0000255" key="10">
    <source>
        <dbReference type="PROSITE-ProRule" id="PRU00448"/>
    </source>
</evidence>
<evidence type="ECO:0000256" key="11">
    <source>
        <dbReference type="SAM" id="MobiDB-lite"/>
    </source>
</evidence>
<evidence type="ECO:0000269" key="12">
    <source>
    </source>
</evidence>
<evidence type="ECO:0000269" key="13">
    <source>
    </source>
</evidence>
<evidence type="ECO:0000269" key="14">
    <source>
    </source>
</evidence>
<evidence type="ECO:0000305" key="15"/>
<evidence type="ECO:0000305" key="16">
    <source>
    </source>
</evidence>
<evidence type="ECO:0000312" key="17">
    <source>
        <dbReference type="RGD" id="3347"/>
    </source>
</evidence>
<evidence type="ECO:0007744" key="18">
    <source>
    </source>
</evidence>
<evidence type="ECO:0007829" key="19">
    <source>
        <dbReference type="PDB" id="1Y0M"/>
    </source>
</evidence>
<evidence type="ECO:0007829" key="20">
    <source>
        <dbReference type="PDB" id="2FJL"/>
    </source>
</evidence>
<evidence type="ECO:0007829" key="21">
    <source>
        <dbReference type="PDB" id="3GQI"/>
    </source>
</evidence>
<evidence type="ECO:0007829" key="22">
    <source>
        <dbReference type="PDB" id="4K45"/>
    </source>
</evidence>
<evidence type="ECO:0007829" key="23">
    <source>
        <dbReference type="PDB" id="6PBC"/>
    </source>
</evidence>
<evidence type="ECO:0007829" key="24">
    <source>
        <dbReference type="PDB" id="7Z3J"/>
    </source>
</evidence>
<sequence length="1290" mass="148548">MAGVGTPCANGCGPSAPSEAEVLHLCRSLEVGTVMTLFYSKKSQRPERKTFQVKLETRQITWSRGADKIEGSIDIREIKEIRPGKTSRDFDRYQEDPAFRPDQSHCFVILYGMEFRLKTLSLQATSEDEVNMWIKGLTWLMEDTLQAATPLQIERWLRKQFYSVDRNREDRISAKDLKNMLSQVNYRVPNMRFLRERLTDFEQRSGDITYGQFAQLYRSLMYSAQKTMDLPFLETNTLRTGERPELCQVSLSEFQQFLLEYQGELWAVDRLQVQEFMLSFLRDPLREIEEPYFFLDELVTFLFSKENSVWNSQLDAVCPETMNNPLSHYWISSSHNTYLTGDQFSSESSLEAYARCLRMGCRCIELDCWDGPDGMPVIYHGHTLTTKIKFSDVLHTIKEHAFVASEYPVILSIEDHCSIAQQRNMAQHFRKVLGDTLLTKPVDIAADGLPSPNQLKRKILIKHKKLAEGSAYEEVPTSVMYSENDISNSIKNGILYLEDPVNHEWYPHYFVLTSSKIYYSEETSSDQGNEDEEEPKEASGSTELHSSEKWFHGKLGAGRDGRHIAERLLTEYCIETGAPDGSFLVRESETFVGDYTLSFWRNGKVQHCRIHSRQDAGTPKFFLTDNLVFDSLYDLITHYQQVPLRCNEFEMRLSEPVPQTNAHESKEWYHASLTRAQAEHMLMRVPRDGAFLVRKRNEPNSYAISFRAEGKIKHCRVQQEGQTVMLGNSEFDSLVDLISYYEKHPLYRKMKLRYPINEEALEKIGTAEPDYGALYEGRNPGFYVEANPMPTFKCAVKALFDYKAQREDELTFTKSAIIQNVEKQDGGWWRGDYGGKKQLWFPSNYVEEMINPAILEPEREHLDENSPLGDLLRGVLDVPACQIAIRPEGKNNRLFVFSISMPSVAQWSLDVAADSQEELQDWVKKIREVAQTADARLTEGKMMERRKKIALELSELVVYCRPVPFDEEKIGTERACYRDMSSFPETKAEKYVNKAKGKKFLQYNRLQLSRIYPKGQRLDSSNYDPLPMWICGSQLVALNFQTPDKPMQMNQALFMAGGHCGYVLQPSTMRDEAFDPFDKSSLRGLEPCVICIEVLGARHLPKNGRGIVCPFVEIEVAGAEYDSTKQKTEFVVDNGLNPVWPAKPFHFQISNPEFAFLRFVVYEEDMFSDQNFLAQATFPVKGLKTGYRAVPLKNNYSEDLELASLLIKIDIFPAKENGDLSPFSGTSLRERASDASSQLFHVRAREGSFEARYQQPFEDFRISQEHLADHFDSRERRAPRRTRVNGDNRL</sequence>
<comment type="function">
    <text evidence="2 3 13 14">Mediates the production of the second messenger molecules diacylglycerol (DAG) and inositol 1,4,5-trisphosphate (IP3) (PubMed:7531435). Plays an important role in the regulation of intracellular signaling cascades. Becomes activated in response to ligand-mediated activation of receptor-type tyrosine kinases, such as PDGFRA, PDGFRB, EGFR, FGFR1, FGFR2, FGFR3 and FGFR4 (PubMed:7531435). Plays a role in actin reorganization and cell migration (By similarity). Guanine nucleotide exchange factor that binds the GTPase DNM1 and catalyzes the dissociation of GDP, allowing a GTP molecule to bind in its place, therefore enhancing DNM1-dependent endocytosis (PubMed:15252117).</text>
</comment>
<comment type="catalytic activity">
    <reaction evidence="14">
        <text>a 1,2-diacyl-sn-glycero-3-phospho-(1D-myo-inositol-4,5-bisphosphate) + H2O = 1D-myo-inositol 1,4,5-trisphosphate + a 1,2-diacyl-sn-glycerol + H(+)</text>
        <dbReference type="Rhea" id="RHEA:33179"/>
        <dbReference type="ChEBI" id="CHEBI:15377"/>
        <dbReference type="ChEBI" id="CHEBI:15378"/>
        <dbReference type="ChEBI" id="CHEBI:17815"/>
        <dbReference type="ChEBI" id="CHEBI:58456"/>
        <dbReference type="ChEBI" id="CHEBI:203600"/>
        <dbReference type="EC" id="3.1.4.11"/>
    </reaction>
    <physiologicalReaction direction="left-to-right" evidence="16">
        <dbReference type="Rhea" id="RHEA:33180"/>
    </physiologicalReaction>
</comment>
<comment type="catalytic activity">
    <reaction evidence="14">
        <text>a 1,2-diacyl-sn-glycero-3-phospho-(1D-myo-inositol) + H2O = 1D-myo-inositol 1-phosphate + a 1,2-diacyl-sn-glycerol + H(+)</text>
        <dbReference type="Rhea" id="RHEA:43484"/>
        <dbReference type="ChEBI" id="CHEBI:15377"/>
        <dbReference type="ChEBI" id="CHEBI:15378"/>
        <dbReference type="ChEBI" id="CHEBI:17815"/>
        <dbReference type="ChEBI" id="CHEBI:57880"/>
        <dbReference type="ChEBI" id="CHEBI:58433"/>
    </reaction>
    <physiologicalReaction direction="left-to-right" evidence="16">
        <dbReference type="Rhea" id="RHEA:43485"/>
    </physiologicalReaction>
</comment>
<comment type="cofactor">
    <cofactor evidence="14">
        <name>Ca(2+)</name>
        <dbReference type="ChEBI" id="CHEBI:29108"/>
    </cofactor>
</comment>
<comment type="activity regulation">
    <text evidence="2">Activated by phosphorylation on tyrosine residues.</text>
</comment>
<comment type="biophysicochemical properties">
    <kinetics>
        <Vmax evidence="14">13.8 umol/min/mg enzyme toward phosphatidylinositol</Vmax>
        <Vmax evidence="14">0.6 umol/min/mg enzyme toward 1,2-diacyl-sn-glycero-3-phospho-(1D-myo-inositol-4,5-bisphosphate)</Vmax>
    </kinetics>
    <phDependence>
        <text evidence="14">Optimum pH is 5.</text>
    </phDependence>
</comment>
<comment type="subunit">
    <text evidence="2 3 13">Interacts with AGAP2 via its SH3 domain. Interacts (via SH2 domain) with RET. Interacts with FLT1 (tyrosine-phosphorylated) (By similarity). Interacts (via SH2 domain) with FGFR1, FGFR2, FGFR3 and FGFR4 (phosphorylated). Interacts with LAT (phosphorylated) upon TCR activation. Interacts (via SH3 domain) with the Pro-rich domain of TNK1. Associates with BLNK, VAV1, GRB2 and NCK1 in a B-cell antigen receptor-dependent fashion. Interacts with CBLB in activated T-cells; which inhibits phosphorylation. Interacts with SHB. Interacts (via SH3 domain) with the Arg/Gly-rich-flanked Pro-rich domains of KHDRBS1/SAM68. This interaction is selectively regulated by arginine methylation of KHDRBS1/SAM68. Interacts with INPP5D/SHIP1, THEMIS and CLNK (By similarity). Interacts with AXL, FLT4 and KIT. Interacts with RALGPS1. Interacts (via the SH2 domains) with VIL1 (phosphorylated at C-terminus tyrosine phosphorylation sites). Interacts (via SH2 domain) with PDGFRA and PDGFRB (tyrosine phosphorylated). Interacts with PIP5K1C (By similarity). Interacts with NTRK1 and NTRK2 (phosphorylated upon ligand-binding). Interacts with SYK; activates PLCG1. Interacts with GRB2, LAT and THEMIS upon TCR activation in thymocytes (By similarity). Interacts with TESPA1; the association is increased with prolonged stimulation of the TCR and may facilitate the assembly of the LAT signalosome (By similarity). Interacts (via C-terminal proline-rich domain (PRD)) with PLCG1 (via SH3 domain); this interaction leads to guanine nucleotide exchange from PlCG1 to DNM1 and enhances DNM1-dependent endocytosis (PubMed:15252117).</text>
</comment>
<comment type="interaction">
    <interactant intactId="EBI-520788">
        <id>P10686</id>
    </interactant>
    <interactant intactId="EBI-2480918">
        <id>Q04589</id>
        <label>Fgfr1</label>
    </interactant>
    <organismsDiffer>false</organismsDiffer>
    <experiments>2</experiments>
</comment>
<comment type="interaction">
    <interactant intactId="EBI-520788">
        <id>P10686</id>
    </interactant>
    <interactant intactId="EBI-1028277">
        <id>P11362</id>
        <label>FGFR1</label>
    </interactant>
    <organismsDiffer>true</organismsDiffer>
    <experiments>4</experiments>
</comment>
<comment type="interaction">
    <interactant intactId="EBI-520788">
        <id>P10686</id>
    </interactant>
    <interactant intactId="EBI-968552">
        <id>Q08881</id>
        <label>ITK</label>
    </interactant>
    <organismsDiffer>true</organismsDiffer>
    <experiments>2</experiments>
</comment>
<comment type="interaction">
    <interactant intactId="EBI-520788">
        <id>P10686</id>
    </interactant>
    <interactant intactId="EBI-646604">
        <id>Q62120</id>
        <label>Jak2</label>
    </interactant>
    <organismsDiffer>true</organismsDiffer>
    <experiments>3</experiments>
</comment>
<comment type="interaction">
    <interactant intactId="EBI-520788">
        <id>P10686</id>
    </interactant>
    <interactant intactId="EBI-519077">
        <id>Q60749</id>
        <label>Khdrbs1</label>
    </interactant>
    <organismsDiffer>true</organismsDiffer>
    <experiments>2</experiments>
</comment>
<comment type="interaction">
    <interactant intactId="EBI-520788">
        <id>P10686</id>
    </interactant>
    <interactant intactId="EBI-8339046">
        <id>Q9WU01</id>
        <label>Khdrbs2</label>
    </interactant>
    <organismsDiffer>true</organismsDiffer>
    <experiments>2</experiments>
</comment>
<comment type="interaction">
    <interactant intactId="EBI-520788">
        <id>P10686</id>
    </interactant>
    <interactant intactId="EBI-968788">
        <id>P18031</id>
        <label>PTPN1</label>
    </interactant>
    <organismsDiffer>true</organismsDiffer>
    <experiments>4</experiments>
</comment>
<comment type="interaction">
    <interactant intactId="EBI-520788">
        <id>P10686</id>
    </interactant>
    <interactant intactId="EBI-520807">
        <id>Q13507</id>
        <label>TRPC3</label>
    </interactant>
    <organismsDiffer>true</organismsDiffer>
    <experiments>2</experiments>
</comment>
<comment type="subcellular location">
    <subcellularLocation>
        <location evidence="2">Cell projection</location>
        <location evidence="2">Lamellipodium</location>
    </subcellularLocation>
    <subcellularLocation>
        <location evidence="2">Cell projection</location>
        <location evidence="2">Ruffle</location>
    </subcellularLocation>
    <text evidence="2">Rapidly redistributed to ruffles and lamellipodia structures in response to epidermal growth factor (EGF) treatment.</text>
</comment>
<comment type="domain">
    <text evidence="2 3">The SH3 domain mediates interaction with CLNK (By similarity). The SH3 domain also mediates interaction with RALGPS1 (By similarity).</text>
</comment>
<comment type="PTM">
    <text evidence="3">Ubiquitinated by CBLB in activated T-cells.</text>
</comment>
<comment type="PTM">
    <text evidence="2 3">Tyrosine phosphorylated in response to signaling via activated FLT3, KIT and PDGFRA (By similarity). Tyrosine phosphorylated by activated FGFR1, FGFR2, FGFR3 and FGFR4. Tyrosine phosphorylated by activated FLT1 and KDR. Tyrosine phosphorylated by activated PDGFRB. The receptor-mediated activation of PLCG1 involves its phosphorylation by tyrosine kinases, in response to ligation of a variety of growth factor receptors and immune system receptors. For instance, SYK phosphorylates and activates PLCG1 in response to ligation of the B-cell receptor. May be dephosphorylated by PTPRJ. Phosphorylated by ITK and TXK on Tyr-783 upon TCR activation in T-cells (By similarity).</text>
</comment>
<keyword id="KW-0002">3D-structure</keyword>
<keyword id="KW-0007">Acetylation</keyword>
<keyword id="KW-0106">Calcium</keyword>
<keyword id="KW-0966">Cell projection</keyword>
<keyword id="KW-0378">Hydrolase</keyword>
<keyword id="KW-0442">Lipid degradation</keyword>
<keyword id="KW-0443">Lipid metabolism</keyword>
<keyword id="KW-0479">Metal-binding</keyword>
<keyword id="KW-0597">Phosphoprotein</keyword>
<keyword id="KW-1185">Reference proteome</keyword>
<keyword id="KW-0677">Repeat</keyword>
<keyword id="KW-0727">SH2 domain</keyword>
<keyword id="KW-0728">SH3 domain</keyword>
<keyword id="KW-0807">Transducer</keyword>
<keyword id="KW-0832">Ubl conjugation</keyword>
<feature type="initiator methionine" description="Removed" evidence="2">
    <location>
        <position position="1"/>
    </location>
</feature>
<feature type="chain" id="PRO_0000088500" description="1-phosphatidylinositol 4,5-bisphosphate phosphodiesterase gamma-1">
    <location>
        <begin position="2"/>
        <end position="1290"/>
    </location>
</feature>
<feature type="domain" description="PH 1" evidence="5">
    <location>
        <begin position="27"/>
        <end position="142"/>
    </location>
</feature>
<feature type="domain" description="EF-hand" evidence="10">
    <location>
        <begin position="152"/>
        <end position="187"/>
    </location>
</feature>
<feature type="domain" description="PI-PLC X-box" evidence="8">
    <location>
        <begin position="320"/>
        <end position="464"/>
    </location>
</feature>
<feature type="domain" description="PH 2; first part" evidence="5">
    <location>
        <begin position="489"/>
        <end position="523"/>
    </location>
</feature>
<feature type="domain" description="SH2 1" evidence="6">
    <location>
        <begin position="550"/>
        <end position="657"/>
    </location>
</feature>
<feature type="domain" description="SH2 2" evidence="6">
    <location>
        <begin position="668"/>
        <end position="756"/>
    </location>
</feature>
<feature type="domain" description="SH3" evidence="7">
    <location>
        <begin position="791"/>
        <end position="851"/>
    </location>
</feature>
<feature type="domain" description="PH 2; second part" evidence="5">
    <location>
        <begin position="895"/>
        <end position="931"/>
    </location>
</feature>
<feature type="domain" description="PI-PLC Y-box" evidence="9">
    <location>
        <begin position="953"/>
        <end position="1070"/>
    </location>
</feature>
<feature type="domain" description="C2" evidence="4">
    <location>
        <begin position="1071"/>
        <end position="1194"/>
    </location>
</feature>
<feature type="region of interest" description="Disordered" evidence="11">
    <location>
        <begin position="522"/>
        <end position="546"/>
    </location>
</feature>
<feature type="region of interest" description="Disordered" evidence="11">
    <location>
        <begin position="1271"/>
        <end position="1290"/>
    </location>
</feature>
<feature type="active site" evidence="8">
    <location>
        <position position="335"/>
    </location>
</feature>
<feature type="active site" evidence="8">
    <location>
        <position position="380"/>
    </location>
</feature>
<feature type="binding site" evidence="10">
    <location>
        <position position="165"/>
    </location>
    <ligand>
        <name>Ca(2+)</name>
        <dbReference type="ChEBI" id="CHEBI:29108"/>
    </ligand>
</feature>
<feature type="binding site" evidence="10">
    <location>
        <position position="167"/>
    </location>
    <ligand>
        <name>Ca(2+)</name>
        <dbReference type="ChEBI" id="CHEBI:29108"/>
    </ligand>
</feature>
<feature type="binding site" evidence="10">
    <location>
        <position position="169"/>
    </location>
    <ligand>
        <name>Ca(2+)</name>
        <dbReference type="ChEBI" id="CHEBI:29108"/>
    </ligand>
</feature>
<feature type="binding site" evidence="10">
    <location>
        <position position="171"/>
    </location>
    <ligand>
        <name>Ca(2+)</name>
        <dbReference type="ChEBI" id="CHEBI:29108"/>
    </ligand>
</feature>
<feature type="binding site" evidence="10">
    <location>
        <position position="176"/>
    </location>
    <ligand>
        <name>Ca(2+)</name>
        <dbReference type="ChEBI" id="CHEBI:29108"/>
    </ligand>
</feature>
<feature type="modified residue" description="N-acetylalanine" evidence="2">
    <location>
        <position position="2"/>
    </location>
</feature>
<feature type="modified residue" description="Phosphotyrosine" evidence="3">
    <location>
        <position position="506"/>
    </location>
</feature>
<feature type="modified residue" description="Phosphotyrosine; by SYK" evidence="1">
    <location>
        <position position="771"/>
    </location>
</feature>
<feature type="modified residue" description="Phosphotyrosine" evidence="2">
    <location>
        <position position="775"/>
    </location>
</feature>
<feature type="modified residue" description="Phosphotyrosine; by ITK, SYK and TXK" evidence="2">
    <location>
        <position position="783"/>
    </location>
</feature>
<feature type="modified residue" description="Phosphotyrosine" evidence="3">
    <location>
        <position position="977"/>
    </location>
</feature>
<feature type="modified residue" description="Phosphoserine" evidence="18">
    <location>
        <position position="1221"/>
    </location>
</feature>
<feature type="modified residue" description="Phosphoserine" evidence="2">
    <location>
        <position position="1227"/>
    </location>
</feature>
<feature type="modified residue" description="Phosphoserine" evidence="2">
    <location>
        <position position="1233"/>
    </location>
</feature>
<feature type="modified residue" description="Phosphoserine" evidence="18">
    <location>
        <position position="1248"/>
    </location>
</feature>
<feature type="modified residue" description="Phosphotyrosine" evidence="1">
    <location>
        <position position="1253"/>
    </location>
</feature>
<feature type="modified residue" description="Phosphoserine" evidence="2">
    <location>
        <position position="1263"/>
    </location>
</feature>
<feature type="mutagenesis site" description="Inhibits interaction with AGAP2." evidence="12">
    <original>P</original>
    <variation>L</variation>
    <location>
        <position position="842"/>
    </location>
</feature>
<feature type="helix" evidence="24">
    <location>
        <begin position="20"/>
        <end position="29"/>
    </location>
</feature>
<feature type="strand" evidence="24">
    <location>
        <begin position="33"/>
        <end position="38"/>
    </location>
</feature>
<feature type="strand" evidence="24">
    <location>
        <begin position="42"/>
        <end position="44"/>
    </location>
</feature>
<feature type="strand" evidence="24">
    <location>
        <begin position="47"/>
        <end position="54"/>
    </location>
</feature>
<feature type="turn" evidence="24">
    <location>
        <begin position="55"/>
        <end position="58"/>
    </location>
</feature>
<feature type="strand" evidence="24">
    <location>
        <begin position="59"/>
        <end position="63"/>
    </location>
</feature>
<feature type="strand" evidence="24">
    <location>
        <begin position="69"/>
        <end position="74"/>
    </location>
</feature>
<feature type="helix" evidence="24">
    <location>
        <begin position="75"/>
        <end position="77"/>
    </location>
</feature>
<feature type="strand" evidence="24">
    <location>
        <begin position="78"/>
        <end position="85"/>
    </location>
</feature>
<feature type="helix" evidence="24">
    <location>
        <begin position="88"/>
        <end position="92"/>
    </location>
</feature>
<feature type="helix" evidence="24">
    <location>
        <begin position="97"/>
        <end position="99"/>
    </location>
</feature>
<feature type="turn" evidence="24">
    <location>
        <begin position="103"/>
        <end position="105"/>
    </location>
</feature>
<feature type="strand" evidence="24">
    <location>
        <begin position="106"/>
        <end position="111"/>
    </location>
</feature>
<feature type="strand" evidence="24">
    <location>
        <begin position="113"/>
        <end position="116"/>
    </location>
</feature>
<feature type="strand" evidence="24">
    <location>
        <begin position="118"/>
        <end position="123"/>
    </location>
</feature>
<feature type="helix" evidence="24">
    <location>
        <begin position="129"/>
        <end position="146"/>
    </location>
</feature>
<feature type="helix" evidence="24">
    <location>
        <begin position="149"/>
        <end position="161"/>
    </location>
</feature>
<feature type="turn" evidence="24">
    <location>
        <begin position="166"/>
        <end position="168"/>
    </location>
</feature>
<feature type="strand" evidence="24">
    <location>
        <begin position="169"/>
        <end position="172"/>
    </location>
</feature>
<feature type="helix" evidence="24">
    <location>
        <begin position="175"/>
        <end position="183"/>
    </location>
</feature>
<feature type="helix" evidence="24">
    <location>
        <begin position="210"/>
        <end position="223"/>
    </location>
</feature>
<feature type="turn" evidence="24">
    <location>
        <begin position="224"/>
        <end position="227"/>
    </location>
</feature>
<feature type="helix" evidence="24">
    <location>
        <begin position="251"/>
        <end position="260"/>
    </location>
</feature>
<feature type="helix" evidence="24">
    <location>
        <begin position="265"/>
        <end position="268"/>
    </location>
</feature>
<feature type="helix" evidence="24">
    <location>
        <begin position="270"/>
        <end position="281"/>
    </location>
</feature>
<feature type="turn" evidence="24">
    <location>
        <begin position="285"/>
        <end position="288"/>
    </location>
</feature>
<feature type="helix" evidence="24">
    <location>
        <begin position="295"/>
        <end position="302"/>
    </location>
</feature>
<feature type="helix" evidence="24">
    <location>
        <begin position="305"/>
        <end position="307"/>
    </location>
</feature>
<feature type="strand" evidence="24">
    <location>
        <begin position="308"/>
        <end position="310"/>
    </location>
</feature>
<feature type="helix" evidence="24">
    <location>
        <begin position="312"/>
        <end position="315"/>
    </location>
</feature>
<feature type="helix" evidence="24">
    <location>
        <begin position="319"/>
        <end position="322"/>
    </location>
</feature>
<feature type="helix" evidence="24">
    <location>
        <begin position="326"/>
        <end position="328"/>
    </location>
</feature>
<feature type="strand" evidence="24">
    <location>
        <begin position="329"/>
        <end position="336"/>
    </location>
</feature>
<feature type="strand" evidence="24">
    <location>
        <begin position="339"/>
        <end position="341"/>
    </location>
</feature>
<feature type="turn" evidence="24">
    <location>
        <begin position="343"/>
        <end position="345"/>
    </location>
</feature>
<feature type="helix" evidence="24">
    <location>
        <begin position="350"/>
        <end position="358"/>
    </location>
</feature>
<feature type="strand" evidence="24">
    <location>
        <begin position="363"/>
        <end position="369"/>
    </location>
</feature>
<feature type="strand" evidence="24">
    <location>
        <begin position="377"/>
        <end position="379"/>
    </location>
</feature>
<feature type="helix" evidence="24">
    <location>
        <begin position="390"/>
        <end position="400"/>
    </location>
</feature>
<feature type="strand" evidence="24">
    <location>
        <begin position="409"/>
        <end position="415"/>
    </location>
</feature>
<feature type="helix" evidence="24">
    <location>
        <begin position="419"/>
        <end position="433"/>
    </location>
</feature>
<feature type="helix" evidence="24">
    <location>
        <begin position="434"/>
        <end position="436"/>
    </location>
</feature>
<feature type="helix" evidence="24">
    <location>
        <begin position="453"/>
        <end position="455"/>
    </location>
</feature>
<feature type="strand" evidence="24">
    <location>
        <begin position="459"/>
        <end position="462"/>
    </location>
</feature>
<feature type="strand" evidence="24">
    <location>
        <begin position="490"/>
        <end position="498"/>
    </location>
</feature>
<feature type="turn" evidence="24">
    <location>
        <begin position="500"/>
        <end position="502"/>
    </location>
</feature>
<feature type="strand" evidence="24">
    <location>
        <begin position="505"/>
        <end position="512"/>
    </location>
</feature>
<feature type="strand" evidence="24">
    <location>
        <begin position="514"/>
        <end position="522"/>
    </location>
</feature>
<feature type="strand" evidence="21">
    <location>
        <begin position="551"/>
        <end position="553"/>
    </location>
</feature>
<feature type="helix" evidence="21">
    <location>
        <begin position="556"/>
        <end position="558"/>
    </location>
</feature>
<feature type="helix" evidence="24">
    <location>
        <begin position="559"/>
        <end position="576"/>
    </location>
</feature>
<feature type="strand" evidence="24">
    <location>
        <begin position="583"/>
        <end position="587"/>
    </location>
</feature>
<feature type="strand" evidence="24">
    <location>
        <begin position="589"/>
        <end position="591"/>
    </location>
</feature>
<feature type="strand" evidence="24">
    <location>
        <begin position="595"/>
        <end position="601"/>
    </location>
</feature>
<feature type="strand" evidence="24">
    <location>
        <begin position="604"/>
        <end position="613"/>
    </location>
</feature>
<feature type="helix" evidence="24">
    <location>
        <begin position="615"/>
        <end position="617"/>
    </location>
</feature>
<feature type="strand" evidence="24">
    <location>
        <begin position="620"/>
        <end position="623"/>
    </location>
</feature>
<feature type="strand" evidence="24">
    <location>
        <begin position="628"/>
        <end position="631"/>
    </location>
</feature>
<feature type="helix" evidence="24">
    <location>
        <begin position="632"/>
        <end position="639"/>
    </location>
</feature>
<feature type="strand" evidence="24">
    <location>
        <begin position="644"/>
        <end position="646"/>
    </location>
</feature>
<feature type="strand" evidence="24">
    <location>
        <begin position="649"/>
        <end position="651"/>
    </location>
</feature>
<feature type="helix" evidence="22">
    <location>
        <begin position="665"/>
        <end position="668"/>
    </location>
</feature>
<feature type="strand" evidence="22">
    <location>
        <begin position="669"/>
        <end position="672"/>
    </location>
</feature>
<feature type="helix" evidence="22">
    <location>
        <begin position="675"/>
        <end position="682"/>
    </location>
</feature>
<feature type="strand" evidence="22">
    <location>
        <begin position="690"/>
        <end position="695"/>
    </location>
</feature>
<feature type="strand" evidence="22">
    <location>
        <begin position="701"/>
        <end position="708"/>
    </location>
</feature>
<feature type="strand" evidence="22">
    <location>
        <begin position="711"/>
        <end position="720"/>
    </location>
</feature>
<feature type="strand" evidence="22">
    <location>
        <begin position="723"/>
        <end position="726"/>
    </location>
</feature>
<feature type="strand" evidence="22">
    <location>
        <begin position="729"/>
        <end position="733"/>
    </location>
</feature>
<feature type="helix" evidence="22">
    <location>
        <begin position="734"/>
        <end position="743"/>
    </location>
</feature>
<feature type="helix" evidence="22">
    <location>
        <begin position="758"/>
        <end position="762"/>
    </location>
</feature>
<feature type="turn" evidence="24">
    <location>
        <begin position="763"/>
        <end position="765"/>
    </location>
</feature>
<feature type="strand" evidence="19">
    <location>
        <begin position="796"/>
        <end position="800"/>
    </location>
</feature>
<feature type="strand" evidence="19">
    <location>
        <begin position="817"/>
        <end position="822"/>
    </location>
</feature>
<feature type="strand" evidence="19">
    <location>
        <begin position="825"/>
        <end position="833"/>
    </location>
</feature>
<feature type="strand" evidence="19">
    <location>
        <begin position="836"/>
        <end position="842"/>
    </location>
</feature>
<feature type="helix" evidence="19">
    <location>
        <begin position="843"/>
        <end position="845"/>
    </location>
</feature>
<feature type="strand" evidence="19">
    <location>
        <begin position="846"/>
        <end position="848"/>
    </location>
</feature>
<feature type="helix" evidence="24">
    <location>
        <begin position="852"/>
        <end position="854"/>
    </location>
</feature>
<feature type="strand" evidence="23">
    <location>
        <begin position="859"/>
        <end position="861"/>
    </location>
</feature>
<feature type="helix" evidence="24">
    <location>
        <begin position="869"/>
        <end position="871"/>
    </location>
</feature>
<feature type="strand" evidence="24">
    <location>
        <begin position="872"/>
        <end position="877"/>
    </location>
</feature>
<feature type="helix" evidence="24">
    <location>
        <begin position="878"/>
        <end position="880"/>
    </location>
</feature>
<feature type="strand" evidence="24">
    <location>
        <begin position="882"/>
        <end position="886"/>
    </location>
</feature>
<feature type="strand" evidence="20">
    <location>
        <begin position="890"/>
        <end position="892"/>
    </location>
</feature>
<feature type="strand" evidence="24">
    <location>
        <begin position="893"/>
        <end position="900"/>
    </location>
</feature>
<feature type="strand" evidence="20">
    <location>
        <begin position="904"/>
        <end position="906"/>
    </location>
</feature>
<feature type="strand" evidence="24">
    <location>
        <begin position="908"/>
        <end position="912"/>
    </location>
</feature>
<feature type="helix" evidence="24">
    <location>
        <begin position="916"/>
        <end position="931"/>
    </location>
</feature>
<feature type="helix" evidence="24">
    <location>
        <begin position="951"/>
        <end position="954"/>
    </location>
</feature>
<feature type="helix" evidence="24">
    <location>
        <begin position="967"/>
        <end position="969"/>
    </location>
</feature>
<feature type="strand" evidence="24">
    <location>
        <begin position="979"/>
        <end position="984"/>
    </location>
</feature>
<feature type="helix" evidence="24">
    <location>
        <begin position="985"/>
        <end position="989"/>
    </location>
</feature>
<feature type="turn" evidence="24">
    <location>
        <begin position="994"/>
        <end position="996"/>
    </location>
</feature>
<feature type="helix" evidence="24">
    <location>
        <begin position="997"/>
        <end position="1006"/>
    </location>
</feature>
<feature type="strand" evidence="24">
    <location>
        <begin position="1009"/>
        <end position="1012"/>
    </location>
</feature>
<feature type="helix" evidence="24">
    <location>
        <begin position="1026"/>
        <end position="1029"/>
    </location>
</feature>
<feature type="turn" evidence="24">
    <location>
        <begin position="1030"/>
        <end position="1032"/>
    </location>
</feature>
<feature type="strand" evidence="24">
    <location>
        <begin position="1034"/>
        <end position="1038"/>
    </location>
</feature>
<feature type="helix" evidence="24">
    <location>
        <begin position="1045"/>
        <end position="1053"/>
    </location>
</feature>
<feature type="turn" evidence="24">
    <location>
        <begin position="1054"/>
        <end position="1058"/>
    </location>
</feature>
<feature type="strand" evidence="24">
    <location>
        <begin position="1061"/>
        <end position="1064"/>
    </location>
</feature>
<feature type="helix" evidence="24">
    <location>
        <begin position="1067"/>
        <end position="1070"/>
    </location>
</feature>
<feature type="strand" evidence="24">
    <location>
        <begin position="1071"/>
        <end position="1073"/>
    </location>
</feature>
<feature type="helix" evidence="24">
    <location>
        <begin position="1079"/>
        <end position="1082"/>
    </location>
</feature>
<feature type="strand" evidence="24">
    <location>
        <begin position="1088"/>
        <end position="1099"/>
    </location>
</feature>
<feature type="strand" evidence="24">
    <location>
        <begin position="1103"/>
        <end position="1106"/>
    </location>
</feature>
<feature type="strand" evidence="24">
    <location>
        <begin position="1110"/>
        <end position="1119"/>
    </location>
</feature>
<feature type="helix" evidence="24">
    <location>
        <begin position="1120"/>
        <end position="1122"/>
    </location>
</feature>
<feature type="strand" evidence="24">
    <location>
        <begin position="1124"/>
        <end position="1127"/>
    </location>
</feature>
<feature type="strand" evidence="24">
    <location>
        <begin position="1132"/>
        <end position="1137"/>
    </location>
</feature>
<feature type="strand" evidence="24">
    <location>
        <begin position="1145"/>
        <end position="1150"/>
    </location>
</feature>
<feature type="strand" evidence="24">
    <location>
        <begin position="1154"/>
        <end position="1164"/>
    </location>
</feature>
<feature type="strand" evidence="24">
    <location>
        <begin position="1170"/>
        <end position="1179"/>
    </location>
</feature>
<feature type="helix" evidence="24">
    <location>
        <begin position="1180"/>
        <end position="1182"/>
    </location>
</feature>
<feature type="strand" evidence="24">
    <location>
        <begin position="1186"/>
        <end position="1193"/>
    </location>
</feature>
<feature type="strand" evidence="24">
    <location>
        <begin position="1199"/>
        <end position="1213"/>
    </location>
</feature>
<protein>
    <recommendedName>
        <fullName evidence="15">1-phosphatidylinositol 4,5-bisphosphate phosphodiesterase gamma-1</fullName>
        <ecNumber evidence="14">3.1.4.11</ecNumber>
    </recommendedName>
    <alternativeName>
        <fullName>Phosphoinositide phospholipase C-gamma-1</fullName>
    </alternativeName>
    <alternativeName>
        <fullName>Phospholipase C-gamma-1</fullName>
        <shortName>PLC-gamma-1</shortName>
    </alternativeName>
</protein>
<reference key="1">
    <citation type="journal article" date="1988" name="Proc. Natl. Acad. Sci. U.S.A.">
        <title>Inositol phospholipid-specific phospholipase C: complete cDNA and protein sequences and sequence homology to tyrosine kinase-related oncogene products.</title>
        <authorList>
            <person name="Suh P.-G."/>
            <person name="Ryu S.H."/>
            <person name="Moon K.H."/>
            <person name="Suh H.W."/>
            <person name="Rhee S.G."/>
        </authorList>
    </citation>
    <scope>NUCLEOTIDE SEQUENCE [MRNA]</scope>
</reference>
<reference key="2">
    <citation type="journal article" date="1993" name="Biochem. Biophys. Res. Commun.">
        <title>Promoter region of the rat phospholipase C-gamma 1 gene.</title>
        <authorList>
            <person name="Lee S.J."/>
            <person name="Ryu S.H."/>
            <person name="Suh P.G."/>
        </authorList>
    </citation>
    <scope>NUCLEOTIDE SEQUENCE [GENOMIC DNA] OF 1-29</scope>
</reference>
<reference key="3">
    <citation type="journal article" date="1994" name="J. Biol. Chem.">
        <title>Signal transduction by fibroblast growth factor receptor-4 (FGFR-4). Comparison with FGFR-1.</title>
        <authorList>
            <person name="Vainikka S."/>
            <person name="Joukov V."/>
            <person name="Wennstrom S."/>
            <person name="Bergman M."/>
            <person name="Pelicci P.G."/>
            <person name="Alitalo K."/>
        </authorList>
    </citation>
    <scope>INTERACTION WITH FGFR4</scope>
    <scope>PHOSPHORYLATION</scope>
</reference>
<reference key="4">
    <citation type="journal article" date="1995" name="Biochem. J.">
        <title>src-homology 2 (SH2) domain ligation as an allosteric regulator: modulation of phosphoinositide-specific phospholipase C gamma 1 structure and activity.</title>
        <authorList>
            <person name="Koblan K.S."/>
            <person name="Schaber M.D."/>
            <person name="Edwards G."/>
            <person name="Gibbs J.B."/>
            <person name="Pompliano D.L."/>
        </authorList>
    </citation>
    <scope>FUNCTION</scope>
    <scope>CATALYTIC ACTIVITY</scope>
    <scope>COFACTOR</scope>
    <scope>BIOPHYSICOCHEMICAL PROPERTIES</scope>
</reference>
<reference key="5">
    <citation type="journal article" date="2002" name="Nature">
        <title>Phospholipase C gamma 1 is a physiological guanine nucleotide exchange factor for the nuclear GTPase PIKE.</title>
        <authorList>
            <person name="Ye K."/>
            <person name="Aghdasi B."/>
            <person name="Luo H.R."/>
            <person name="Moriarity J.L."/>
            <person name="Wu F.Y."/>
            <person name="Hong J.J."/>
            <person name="Hurt K.J."/>
            <person name="Bae S.S."/>
            <person name="Suh P.-G."/>
            <person name="Snyder S.H."/>
        </authorList>
    </citation>
    <scope>INTERACTION WITH AGAP2</scope>
    <scope>MUTAGENESIS OF PRO-842</scope>
</reference>
<reference key="6">
    <citation type="journal article" date="2004" name="J. Cell Sci.">
        <title>Phospholipase C-gamma1 is a guanine nucleotide exchange factor for dynamin-1 and enhances dynamin-1-dependent epidermal growth factor receptor endocytosis.</title>
        <authorList>
            <person name="Choi J.H."/>
            <person name="Park J.B."/>
            <person name="Bae S.S."/>
            <person name="Yun S."/>
            <person name="Kim H.S."/>
            <person name="Hong W.P."/>
            <person name="Kim I.S."/>
            <person name="Kim J.H."/>
            <person name="Han M.Y."/>
            <person name="Ryu S.H."/>
            <person name="Patterson R.L."/>
            <person name="Snyder S.H."/>
            <person name="Suh P.G."/>
        </authorList>
    </citation>
    <scope>FUNCTION</scope>
    <scope>INTERACTION WITH DNM1</scope>
</reference>
<reference key="7">
    <citation type="journal article" date="2012" name="Nat. Commun.">
        <title>Quantitative maps of protein phosphorylation sites across 14 different rat organs and tissues.</title>
        <authorList>
            <person name="Lundby A."/>
            <person name="Secher A."/>
            <person name="Lage K."/>
            <person name="Nordsborg N.B."/>
            <person name="Dmytriyev A."/>
            <person name="Lundby C."/>
            <person name="Olsen J.V."/>
        </authorList>
    </citation>
    <scope>PHOSPHORYLATION [LARGE SCALE ANALYSIS] AT SER-1221 AND SER-1248</scope>
    <scope>IDENTIFICATION BY MASS SPECTROMETRY [LARGE SCALE ANALYSIS]</scope>
</reference>
<reference key="8">
    <citation type="journal article" date="2006" name="J. Biol. Chem.">
        <title>Structural characterization of the split pleckstrin homology domain in phospholipase C-gamma1 and its interaction with TRPC3.</title>
        <authorList>
            <person name="Wen W."/>
            <person name="Yan J."/>
            <person name="Zhang M."/>
        </authorList>
    </citation>
    <scope>STRUCTURE BY NMR OF 489-553 AND 663-759</scope>
</reference>
<organism>
    <name type="scientific">Rattus norvegicus</name>
    <name type="common">Rat</name>
    <dbReference type="NCBI Taxonomy" id="10116"/>
    <lineage>
        <taxon>Eukaryota</taxon>
        <taxon>Metazoa</taxon>
        <taxon>Chordata</taxon>
        <taxon>Craniata</taxon>
        <taxon>Vertebrata</taxon>
        <taxon>Euteleostomi</taxon>
        <taxon>Mammalia</taxon>
        <taxon>Eutheria</taxon>
        <taxon>Euarchontoglires</taxon>
        <taxon>Glires</taxon>
        <taxon>Rodentia</taxon>
        <taxon>Myomorpha</taxon>
        <taxon>Muroidea</taxon>
        <taxon>Muridae</taxon>
        <taxon>Murinae</taxon>
        <taxon>Rattus</taxon>
    </lineage>
</organism>
<proteinExistence type="evidence at protein level"/>
<accession>P10686</accession>
<dbReference type="EC" id="3.1.4.11" evidence="14"/>
<dbReference type="EMBL" id="J03806">
    <property type="protein sequence ID" value="AAA41921.1"/>
    <property type="molecule type" value="mRNA"/>
</dbReference>
<dbReference type="EMBL" id="L14476">
    <property type="status" value="NOT_ANNOTATED_CDS"/>
    <property type="molecule type" value="Genomic_DNA"/>
</dbReference>
<dbReference type="PIR" id="A31317">
    <property type="entry name" value="A31317"/>
</dbReference>
<dbReference type="RefSeq" id="NP_037319.1">
    <property type="nucleotide sequence ID" value="NM_013187.1"/>
</dbReference>
<dbReference type="PDB" id="1Y0M">
    <property type="method" value="X-ray"/>
    <property type="resolution" value="1.20 A"/>
    <property type="chains" value="A=791-851"/>
</dbReference>
<dbReference type="PDB" id="1YWO">
    <property type="method" value="X-ray"/>
    <property type="resolution" value="1.81 A"/>
    <property type="chains" value="A=790-851"/>
</dbReference>
<dbReference type="PDB" id="1YWP">
    <property type="method" value="X-ray"/>
    <property type="resolution" value="1.60 A"/>
    <property type="chains" value="A=790-851"/>
</dbReference>
<dbReference type="PDB" id="2FJL">
    <property type="method" value="NMR"/>
    <property type="chains" value="A=489-547, A=851-933"/>
</dbReference>
<dbReference type="PDB" id="3GQI">
    <property type="method" value="X-ray"/>
    <property type="resolution" value="2.50 A"/>
    <property type="chains" value="B=545-770"/>
</dbReference>
<dbReference type="PDB" id="4K44">
    <property type="method" value="X-ray"/>
    <property type="resolution" value="1.70 A"/>
    <property type="chains" value="A/B=664-766"/>
</dbReference>
<dbReference type="PDB" id="4K45">
    <property type="method" value="X-ray"/>
    <property type="resolution" value="1.50 A"/>
    <property type="chains" value="A=664-766, B=770-787"/>
</dbReference>
<dbReference type="PDB" id="5EG3">
    <property type="method" value="X-ray"/>
    <property type="resolution" value="2.61 A"/>
    <property type="chains" value="B=661-773"/>
</dbReference>
<dbReference type="PDB" id="6PBC">
    <property type="method" value="X-ray"/>
    <property type="resolution" value="2.46 A"/>
    <property type="chains" value="A=21-200, A=791-1215"/>
</dbReference>
<dbReference type="PDB" id="7T8T">
    <property type="method" value="EM"/>
    <property type="resolution" value="3.68 A"/>
    <property type="chains" value="A=20-1215"/>
</dbReference>
<dbReference type="PDB" id="7Z3J">
    <property type="method" value="X-ray"/>
    <property type="resolution" value="2.00 A"/>
    <property type="chains" value="A=20-765, A=791-1215"/>
</dbReference>
<dbReference type="PDBsum" id="1Y0M"/>
<dbReference type="PDBsum" id="1YWO"/>
<dbReference type="PDBsum" id="1YWP"/>
<dbReference type="PDBsum" id="2FJL"/>
<dbReference type="PDBsum" id="3GQI"/>
<dbReference type="PDBsum" id="4K44"/>
<dbReference type="PDBsum" id="4K45"/>
<dbReference type="PDBsum" id="5EG3"/>
<dbReference type="PDBsum" id="6PBC"/>
<dbReference type="PDBsum" id="7T8T"/>
<dbReference type="PDBsum" id="7Z3J"/>
<dbReference type="SMR" id="P10686"/>
<dbReference type="BioGRID" id="247766">
    <property type="interactions" value="5"/>
</dbReference>
<dbReference type="CORUM" id="P10686"/>
<dbReference type="DIP" id="DIP-2863N"/>
<dbReference type="FunCoup" id="P10686">
    <property type="interactions" value="3471"/>
</dbReference>
<dbReference type="IntAct" id="P10686">
    <property type="interactions" value="27"/>
</dbReference>
<dbReference type="MINT" id="P10686"/>
<dbReference type="STRING" id="10116.ENSRNOP00000069822"/>
<dbReference type="BindingDB" id="P10686"/>
<dbReference type="ChEMBL" id="CHEMBL5188"/>
<dbReference type="SwissLipids" id="SLP:000000960"/>
<dbReference type="iPTMnet" id="P10686"/>
<dbReference type="PhosphoSitePlus" id="P10686"/>
<dbReference type="PaxDb" id="10116-ENSRNOP00000022276"/>
<dbReference type="GeneID" id="25738"/>
<dbReference type="KEGG" id="rno:25738"/>
<dbReference type="UCSC" id="RGD:3347">
    <property type="organism name" value="rat"/>
</dbReference>
<dbReference type="AGR" id="RGD:3347"/>
<dbReference type="CTD" id="5335"/>
<dbReference type="RGD" id="3347">
    <property type="gene designation" value="Plcg1"/>
</dbReference>
<dbReference type="eggNOG" id="KOG1264">
    <property type="taxonomic scope" value="Eukaryota"/>
</dbReference>
<dbReference type="InParanoid" id="P10686"/>
<dbReference type="OrthoDB" id="6416251at2759"/>
<dbReference type="PhylomeDB" id="P10686"/>
<dbReference type="BRENDA" id="3.1.4.11">
    <property type="organism ID" value="5301"/>
</dbReference>
<dbReference type="Reactome" id="R-RNO-1169408">
    <property type="pathway name" value="ISG15 antiviral mechanism"/>
</dbReference>
<dbReference type="Reactome" id="R-RNO-1855204">
    <property type="pathway name" value="Synthesis of IP3 and IP4 in the cytosol"/>
</dbReference>
<dbReference type="Reactome" id="R-RNO-186763">
    <property type="pathway name" value="Downstream signal transduction"/>
</dbReference>
<dbReference type="Reactome" id="R-RNO-201556">
    <property type="pathway name" value="Signaling by ALK"/>
</dbReference>
<dbReference type="Reactome" id="R-RNO-202433">
    <property type="pathway name" value="Generation of second messenger molecules"/>
</dbReference>
<dbReference type="Reactome" id="R-RNO-2029485">
    <property type="pathway name" value="Role of phospholipids in phagocytosis"/>
</dbReference>
<dbReference type="Reactome" id="R-RNO-210990">
    <property type="pathway name" value="PECAM1 interactions"/>
</dbReference>
<dbReference type="Reactome" id="R-RNO-212718">
    <property type="pathway name" value="EGFR interacts with phospholipase C-gamma"/>
</dbReference>
<dbReference type="Reactome" id="R-RNO-2424491">
    <property type="pathway name" value="DAP12 signaling"/>
</dbReference>
<dbReference type="Reactome" id="R-RNO-2871796">
    <property type="pathway name" value="FCERI mediated MAPK activation"/>
</dbReference>
<dbReference type="Reactome" id="R-RNO-2871809">
    <property type="pathway name" value="FCERI mediated Ca+2 mobilization"/>
</dbReference>
<dbReference type="Reactome" id="R-RNO-5218921">
    <property type="pathway name" value="VEGFR2 mediated cell proliferation"/>
</dbReference>
<dbReference type="Reactome" id="R-RNO-5654219">
    <property type="pathway name" value="Phospholipase C-mediated cascade: FGFR1"/>
</dbReference>
<dbReference type="Reactome" id="R-RNO-5654221">
    <property type="pathway name" value="Phospholipase C-mediated cascade, FGFR2"/>
</dbReference>
<dbReference type="Reactome" id="R-RNO-5654227">
    <property type="pathway name" value="Phospholipase C-mediated cascade, FGFR3"/>
</dbReference>
<dbReference type="Reactome" id="R-RNO-5654228">
    <property type="pathway name" value="Phospholipase C-mediated cascade, FGFR4"/>
</dbReference>
<dbReference type="Reactome" id="R-RNO-8853659">
    <property type="pathway name" value="RET signaling"/>
</dbReference>
<dbReference type="Reactome" id="R-RNO-9026527">
    <property type="pathway name" value="Activated NTRK2 signals through PLCG1"/>
</dbReference>
<dbReference type="Reactome" id="R-RNO-9034793">
    <property type="pathway name" value="Activated NTRK3 signals through PLCG1"/>
</dbReference>
<dbReference type="EvolutionaryTrace" id="P10686"/>
<dbReference type="PRO" id="PR:P10686"/>
<dbReference type="Proteomes" id="UP000002494">
    <property type="component" value="Unplaced"/>
</dbReference>
<dbReference type="GO" id="GO:0042995">
    <property type="term" value="C:cell projection"/>
    <property type="evidence" value="ECO:0000266"/>
    <property type="project" value="RGD"/>
</dbReference>
<dbReference type="GO" id="GO:0005911">
    <property type="term" value="C:cell-cell junction"/>
    <property type="evidence" value="ECO:0000266"/>
    <property type="project" value="RGD"/>
</dbReference>
<dbReference type="GO" id="GO:0030136">
    <property type="term" value="C:clathrin-coated vesicle"/>
    <property type="evidence" value="ECO:0000314"/>
    <property type="project" value="RGD"/>
</dbReference>
<dbReference type="GO" id="GO:0008180">
    <property type="term" value="C:COP9 signalosome"/>
    <property type="evidence" value="ECO:0000250"/>
    <property type="project" value="UniProtKB"/>
</dbReference>
<dbReference type="GO" id="GO:0005737">
    <property type="term" value="C:cytoplasm"/>
    <property type="evidence" value="ECO:0000266"/>
    <property type="project" value="RGD"/>
</dbReference>
<dbReference type="GO" id="GO:0005829">
    <property type="term" value="C:cytosol"/>
    <property type="evidence" value="ECO:0000266"/>
    <property type="project" value="RGD"/>
</dbReference>
<dbReference type="GO" id="GO:0098978">
    <property type="term" value="C:glutamatergic synapse"/>
    <property type="evidence" value="ECO:0000266"/>
    <property type="project" value="RGD"/>
</dbReference>
<dbReference type="GO" id="GO:0030027">
    <property type="term" value="C:lamellipodium"/>
    <property type="evidence" value="ECO:0000250"/>
    <property type="project" value="UniProtKB"/>
</dbReference>
<dbReference type="GO" id="GO:0005886">
    <property type="term" value="C:plasma membrane"/>
    <property type="evidence" value="ECO:0000266"/>
    <property type="project" value="RGD"/>
</dbReference>
<dbReference type="GO" id="GO:0001726">
    <property type="term" value="C:ruffle"/>
    <property type="evidence" value="ECO:0000250"/>
    <property type="project" value="UniProtKB"/>
</dbReference>
<dbReference type="GO" id="GO:0032587">
    <property type="term" value="C:ruffle membrane"/>
    <property type="evidence" value="ECO:0000266"/>
    <property type="project" value="RGD"/>
</dbReference>
<dbReference type="GO" id="GO:0098685">
    <property type="term" value="C:Schaffer collateral - CA1 synapse"/>
    <property type="evidence" value="ECO:0000266"/>
    <property type="project" value="RGD"/>
</dbReference>
<dbReference type="GO" id="GO:0005509">
    <property type="term" value="F:calcium ion binding"/>
    <property type="evidence" value="ECO:0007669"/>
    <property type="project" value="InterPro"/>
</dbReference>
<dbReference type="GO" id="GO:0050429">
    <property type="term" value="F:calcium-dependent phospholipase C activity"/>
    <property type="evidence" value="ECO:0000314"/>
    <property type="project" value="UniProtKB"/>
</dbReference>
<dbReference type="GO" id="GO:0035254">
    <property type="term" value="F:glutamate receptor binding"/>
    <property type="evidence" value="ECO:0000266"/>
    <property type="project" value="RGD"/>
</dbReference>
<dbReference type="GO" id="GO:0005085">
    <property type="term" value="F:guanyl-nucleotide exchange factor activity"/>
    <property type="evidence" value="ECO:0000314"/>
    <property type="project" value="UniProtKB"/>
</dbReference>
<dbReference type="GO" id="GO:0005158">
    <property type="term" value="F:insulin receptor binding"/>
    <property type="evidence" value="ECO:0000314"/>
    <property type="project" value="RGD"/>
</dbReference>
<dbReference type="GO" id="GO:0005168">
    <property type="term" value="F:neurotrophin TRKA receptor binding"/>
    <property type="evidence" value="ECO:0000266"/>
    <property type="project" value="RGD"/>
</dbReference>
<dbReference type="GO" id="GO:0004435">
    <property type="term" value="F:phosphatidylinositol-4,5-bisphosphate phospholipase C activity"/>
    <property type="evidence" value="ECO:0000314"/>
    <property type="project" value="UniProtKB"/>
</dbReference>
<dbReference type="GO" id="GO:0004629">
    <property type="term" value="F:phospholipase C activity"/>
    <property type="evidence" value="ECO:0000266"/>
    <property type="project" value="RGD"/>
</dbReference>
<dbReference type="GO" id="GO:0051219">
    <property type="term" value="F:phosphoprotein binding"/>
    <property type="evidence" value="ECO:0000353"/>
    <property type="project" value="RGD"/>
</dbReference>
<dbReference type="GO" id="GO:0019901">
    <property type="term" value="F:protein kinase binding"/>
    <property type="evidence" value="ECO:0000266"/>
    <property type="project" value="RGD"/>
</dbReference>
<dbReference type="GO" id="GO:0030971">
    <property type="term" value="F:receptor tyrosine kinase binding"/>
    <property type="evidence" value="ECO:0000266"/>
    <property type="project" value="RGD"/>
</dbReference>
<dbReference type="GO" id="GO:0006816">
    <property type="term" value="P:calcium ion transport"/>
    <property type="evidence" value="ECO:0000315"/>
    <property type="project" value="RGD"/>
</dbReference>
<dbReference type="GO" id="GO:0019722">
    <property type="term" value="P:calcium-mediated signaling"/>
    <property type="evidence" value="ECO:0000266"/>
    <property type="project" value="RGD"/>
</dbReference>
<dbReference type="GO" id="GO:0016477">
    <property type="term" value="P:cell migration"/>
    <property type="evidence" value="ECO:0000266"/>
    <property type="project" value="RGD"/>
</dbReference>
<dbReference type="GO" id="GO:0071364">
    <property type="term" value="P:cellular response to epidermal growth factor stimulus"/>
    <property type="evidence" value="ECO:0000250"/>
    <property type="project" value="UniProtKB"/>
</dbReference>
<dbReference type="GO" id="GO:0007173">
    <property type="term" value="P:epidermal growth factor receptor signaling pathway"/>
    <property type="evidence" value="ECO:0000314"/>
    <property type="project" value="UniProtKB"/>
</dbReference>
<dbReference type="GO" id="GO:0001701">
    <property type="term" value="P:in utero embryonic development"/>
    <property type="evidence" value="ECO:0000266"/>
    <property type="project" value="RGD"/>
</dbReference>
<dbReference type="GO" id="GO:0032959">
    <property type="term" value="P:inositol trisphosphate biosynthetic process"/>
    <property type="evidence" value="ECO:0000315"/>
    <property type="project" value="RGD"/>
</dbReference>
<dbReference type="GO" id="GO:0032957">
    <property type="term" value="P:inositol trisphosphate metabolic process"/>
    <property type="evidence" value="ECO:0000314"/>
    <property type="project" value="RGD"/>
</dbReference>
<dbReference type="GO" id="GO:0050804">
    <property type="term" value="P:modulation of chemical synaptic transmission"/>
    <property type="evidence" value="ECO:0000266"/>
    <property type="project" value="RGD"/>
</dbReference>
<dbReference type="GO" id="GO:0031161">
    <property type="term" value="P:phosphatidylinositol catabolic process"/>
    <property type="evidence" value="ECO:0000314"/>
    <property type="project" value="RGD"/>
</dbReference>
<dbReference type="GO" id="GO:0046488">
    <property type="term" value="P:phosphatidylinositol metabolic process"/>
    <property type="evidence" value="ECO:0000314"/>
    <property type="project" value="UniProtKB"/>
</dbReference>
<dbReference type="GO" id="GO:0048015">
    <property type="term" value="P:phosphatidylinositol-mediated signaling"/>
    <property type="evidence" value="ECO:0000318"/>
    <property type="project" value="GO_Central"/>
</dbReference>
<dbReference type="GO" id="GO:0045766">
    <property type="term" value="P:positive regulation of angiogenesis"/>
    <property type="evidence" value="ECO:0000266"/>
    <property type="project" value="RGD"/>
</dbReference>
<dbReference type="GO" id="GO:0043536">
    <property type="term" value="P:positive regulation of blood vessel endothelial cell migration"/>
    <property type="evidence" value="ECO:0000266"/>
    <property type="project" value="RGD"/>
</dbReference>
<dbReference type="GO" id="GO:2000353">
    <property type="term" value="P:positive regulation of endothelial cell apoptotic process"/>
    <property type="evidence" value="ECO:0000266"/>
    <property type="project" value="RGD"/>
</dbReference>
<dbReference type="GO" id="GO:0010634">
    <property type="term" value="P:positive regulation of epithelial cell migration"/>
    <property type="evidence" value="ECO:0000315"/>
    <property type="project" value="RGD"/>
</dbReference>
<dbReference type="GO" id="GO:0051281">
    <property type="term" value="P:positive regulation of release of sequestered calcium ion into cytosol"/>
    <property type="evidence" value="ECO:0000266"/>
    <property type="project" value="RGD"/>
</dbReference>
<dbReference type="GO" id="GO:1905564">
    <property type="term" value="P:positive regulation of vascular endothelial cell proliferation"/>
    <property type="evidence" value="ECO:0000266"/>
    <property type="project" value="RGD"/>
</dbReference>
<dbReference type="GO" id="GO:0051209">
    <property type="term" value="P:release of sequestered calcium ion into cytosol"/>
    <property type="evidence" value="ECO:0000318"/>
    <property type="project" value="GO_Central"/>
</dbReference>
<dbReference type="GO" id="GO:1904643">
    <property type="term" value="P:response to curcumin"/>
    <property type="evidence" value="ECO:0000314"/>
    <property type="project" value="RGD"/>
</dbReference>
<dbReference type="GO" id="GO:0009629">
    <property type="term" value="P:response to gravity"/>
    <property type="evidence" value="ECO:0000270"/>
    <property type="project" value="RGD"/>
</dbReference>
<dbReference type="GO" id="GO:0042542">
    <property type="term" value="P:response to hydrogen peroxide"/>
    <property type="evidence" value="ECO:0000270"/>
    <property type="project" value="RGD"/>
</dbReference>
<dbReference type="GO" id="GO:0050852">
    <property type="term" value="P:T cell receptor signaling pathway"/>
    <property type="evidence" value="ECO:0000266"/>
    <property type="project" value="RGD"/>
</dbReference>
<dbReference type="CDD" id="cd00275">
    <property type="entry name" value="C2_PLC_like"/>
    <property type="match status" value="1"/>
</dbReference>
<dbReference type="CDD" id="cd13362">
    <property type="entry name" value="PH_PLC_gamma"/>
    <property type="match status" value="1"/>
</dbReference>
<dbReference type="CDD" id="cd13234">
    <property type="entry name" value="PHsplit_PLC_gamma"/>
    <property type="match status" value="1"/>
</dbReference>
<dbReference type="CDD" id="cd08592">
    <property type="entry name" value="PI-PLCc_gamma"/>
    <property type="match status" value="1"/>
</dbReference>
<dbReference type="CDD" id="cd09932">
    <property type="entry name" value="SH2_C-SH2_PLC_gamma_like"/>
    <property type="match status" value="1"/>
</dbReference>
<dbReference type="CDD" id="cd10341">
    <property type="entry name" value="SH2_N-SH2_PLC_gamma_like"/>
    <property type="match status" value="1"/>
</dbReference>
<dbReference type="CDD" id="cd11970">
    <property type="entry name" value="SH3_PLCgamma1"/>
    <property type="match status" value="1"/>
</dbReference>
<dbReference type="DisProt" id="DP01851"/>
<dbReference type="FunFam" id="2.30.29.30:FF:000155">
    <property type="entry name" value="1-phosphatidylinositol 4,5-bisphosphate phosphodiesterase gamma"/>
    <property type="match status" value="1"/>
</dbReference>
<dbReference type="FunFam" id="2.30.30.40:FF:000051">
    <property type="entry name" value="1-phosphatidylinositol 4,5-bisphosphate phosphodiesterase gamma"/>
    <property type="match status" value="1"/>
</dbReference>
<dbReference type="FunFam" id="2.60.40.150:FF:000067">
    <property type="entry name" value="1-phosphatidylinositol 4,5-bisphosphate phosphodiesterase gamma"/>
    <property type="match status" value="1"/>
</dbReference>
<dbReference type="FunFam" id="3.20.20.190:FF:000004">
    <property type="entry name" value="1-phosphatidylinositol 4,5-bisphosphate phosphodiesterase gamma"/>
    <property type="match status" value="1"/>
</dbReference>
<dbReference type="FunFam" id="3.20.20.190:FF:000007">
    <property type="entry name" value="1-phosphatidylinositol 4,5-bisphosphate phosphodiesterase gamma"/>
    <property type="match status" value="1"/>
</dbReference>
<dbReference type="FunFam" id="3.30.505.10:FF:000009">
    <property type="entry name" value="1-phosphatidylinositol 4,5-bisphosphate phosphodiesterase gamma"/>
    <property type="match status" value="1"/>
</dbReference>
<dbReference type="FunFam" id="3.30.505.10:FF:000011">
    <property type="entry name" value="1-phosphatidylinositol 4,5-bisphosphate phosphodiesterase gamma"/>
    <property type="match status" value="1"/>
</dbReference>
<dbReference type="Gene3D" id="2.60.40.150">
    <property type="entry name" value="C2 domain"/>
    <property type="match status" value="1"/>
</dbReference>
<dbReference type="Gene3D" id="1.10.238.10">
    <property type="entry name" value="EF-hand"/>
    <property type="match status" value="1"/>
</dbReference>
<dbReference type="Gene3D" id="3.20.20.190">
    <property type="entry name" value="Phosphatidylinositol (PI) phosphodiesterase"/>
    <property type="match status" value="2"/>
</dbReference>
<dbReference type="Gene3D" id="2.30.29.30">
    <property type="entry name" value="Pleckstrin-homology domain (PH domain)/Phosphotyrosine-binding domain (PTB)"/>
    <property type="match status" value="1"/>
</dbReference>
<dbReference type="Gene3D" id="3.30.505.10">
    <property type="entry name" value="SH2 domain"/>
    <property type="match status" value="2"/>
</dbReference>
<dbReference type="Gene3D" id="2.30.30.40">
    <property type="entry name" value="SH3 Domains"/>
    <property type="match status" value="1"/>
</dbReference>
<dbReference type="InterPro" id="IPR000008">
    <property type="entry name" value="C2_dom"/>
</dbReference>
<dbReference type="InterPro" id="IPR035892">
    <property type="entry name" value="C2_domain_sf"/>
</dbReference>
<dbReference type="InterPro" id="IPR011992">
    <property type="entry name" value="EF-hand-dom_pair"/>
</dbReference>
<dbReference type="InterPro" id="IPR018247">
    <property type="entry name" value="EF_Hand_1_Ca_BS"/>
</dbReference>
<dbReference type="InterPro" id="IPR002048">
    <property type="entry name" value="EF_hand_dom"/>
</dbReference>
<dbReference type="InterPro" id="IPR011993">
    <property type="entry name" value="PH-like_dom_sf"/>
</dbReference>
<dbReference type="InterPro" id="IPR001849">
    <property type="entry name" value="PH_domain"/>
</dbReference>
<dbReference type="InterPro" id="IPR001192">
    <property type="entry name" value="PI-PLC_fam"/>
</dbReference>
<dbReference type="InterPro" id="IPR016279">
    <property type="entry name" value="PLC-gamma"/>
</dbReference>
<dbReference type="InterPro" id="IPR035023">
    <property type="entry name" value="PLC-gamma_C-SH2"/>
</dbReference>
<dbReference type="InterPro" id="IPR035024">
    <property type="entry name" value="PLC-gamma_N-SH2"/>
</dbReference>
<dbReference type="InterPro" id="IPR017946">
    <property type="entry name" value="PLC-like_Pdiesterase_TIM-brl"/>
</dbReference>
<dbReference type="InterPro" id="IPR057061">
    <property type="entry name" value="PLCG_EF-hand_2"/>
</dbReference>
<dbReference type="InterPro" id="IPR035724">
    <property type="entry name" value="PLCgamma1_SH3"/>
</dbReference>
<dbReference type="InterPro" id="IPR000909">
    <property type="entry name" value="PLipase_C_PInositol-sp_X_dom"/>
</dbReference>
<dbReference type="InterPro" id="IPR001711">
    <property type="entry name" value="PLipase_C_Pinositol-sp_Y"/>
</dbReference>
<dbReference type="InterPro" id="IPR000980">
    <property type="entry name" value="SH2"/>
</dbReference>
<dbReference type="InterPro" id="IPR036860">
    <property type="entry name" value="SH2_dom_sf"/>
</dbReference>
<dbReference type="InterPro" id="IPR036028">
    <property type="entry name" value="SH3-like_dom_sf"/>
</dbReference>
<dbReference type="InterPro" id="IPR001452">
    <property type="entry name" value="SH3_domain"/>
</dbReference>
<dbReference type="PANTHER" id="PTHR10336:SF173">
    <property type="entry name" value="1-PHOSPHATIDYLINOSITOL 4,5-BISPHOSPHATE PHOSPHODIESTERASE GAMMA-1"/>
    <property type="match status" value="1"/>
</dbReference>
<dbReference type="PANTHER" id="PTHR10336">
    <property type="entry name" value="PHOSPHOINOSITIDE-SPECIFIC PHOSPHOLIPASE C FAMILY PROTEIN"/>
    <property type="match status" value="1"/>
</dbReference>
<dbReference type="Pfam" id="PF00168">
    <property type="entry name" value="C2"/>
    <property type="match status" value="1"/>
</dbReference>
<dbReference type="Pfam" id="PF23329">
    <property type="entry name" value="EF_HAND_1_PLCG"/>
    <property type="match status" value="1"/>
</dbReference>
<dbReference type="Pfam" id="PF23583">
    <property type="entry name" value="EF_HAND_2_PLCG"/>
    <property type="match status" value="1"/>
</dbReference>
<dbReference type="Pfam" id="PF00169">
    <property type="entry name" value="PH"/>
    <property type="match status" value="1"/>
</dbReference>
<dbReference type="Pfam" id="PF00388">
    <property type="entry name" value="PI-PLC-X"/>
    <property type="match status" value="1"/>
</dbReference>
<dbReference type="Pfam" id="PF00387">
    <property type="entry name" value="PI-PLC-Y"/>
    <property type="match status" value="1"/>
</dbReference>
<dbReference type="Pfam" id="PF00017">
    <property type="entry name" value="SH2"/>
    <property type="match status" value="2"/>
</dbReference>
<dbReference type="Pfam" id="PF00018">
    <property type="entry name" value="SH3_1"/>
    <property type="match status" value="1"/>
</dbReference>
<dbReference type="PIRSF" id="PIRSF000952">
    <property type="entry name" value="PLC-gamma"/>
    <property type="match status" value="1"/>
</dbReference>
<dbReference type="PRINTS" id="PR00390">
    <property type="entry name" value="PHPHLIPASEC"/>
</dbReference>
<dbReference type="PRINTS" id="PR00401">
    <property type="entry name" value="SH2DOMAIN"/>
</dbReference>
<dbReference type="PRINTS" id="PR00452">
    <property type="entry name" value="SH3DOMAIN"/>
</dbReference>
<dbReference type="SMART" id="SM00239">
    <property type="entry name" value="C2"/>
    <property type="match status" value="1"/>
</dbReference>
<dbReference type="SMART" id="SM00233">
    <property type="entry name" value="PH"/>
    <property type="match status" value="3"/>
</dbReference>
<dbReference type="SMART" id="SM00148">
    <property type="entry name" value="PLCXc"/>
    <property type="match status" value="1"/>
</dbReference>
<dbReference type="SMART" id="SM00149">
    <property type="entry name" value="PLCYc"/>
    <property type="match status" value="1"/>
</dbReference>
<dbReference type="SMART" id="SM00252">
    <property type="entry name" value="SH2"/>
    <property type="match status" value="2"/>
</dbReference>
<dbReference type="SMART" id="SM00326">
    <property type="entry name" value="SH3"/>
    <property type="match status" value="1"/>
</dbReference>
<dbReference type="SUPFAM" id="SSF49562">
    <property type="entry name" value="C2 domain (Calcium/lipid-binding domain, CaLB)"/>
    <property type="match status" value="1"/>
</dbReference>
<dbReference type="SUPFAM" id="SSF47473">
    <property type="entry name" value="EF-hand"/>
    <property type="match status" value="1"/>
</dbReference>
<dbReference type="SUPFAM" id="SSF50729">
    <property type="entry name" value="PH domain-like"/>
    <property type="match status" value="1"/>
</dbReference>
<dbReference type="SUPFAM" id="SSF51695">
    <property type="entry name" value="PLC-like phosphodiesterases"/>
    <property type="match status" value="1"/>
</dbReference>
<dbReference type="SUPFAM" id="SSF55550">
    <property type="entry name" value="SH2 domain"/>
    <property type="match status" value="2"/>
</dbReference>
<dbReference type="SUPFAM" id="SSF50044">
    <property type="entry name" value="SH3-domain"/>
    <property type="match status" value="1"/>
</dbReference>
<dbReference type="PROSITE" id="PS50004">
    <property type="entry name" value="C2"/>
    <property type="match status" value="1"/>
</dbReference>
<dbReference type="PROSITE" id="PS00018">
    <property type="entry name" value="EF_HAND_1"/>
    <property type="match status" value="1"/>
</dbReference>
<dbReference type="PROSITE" id="PS50222">
    <property type="entry name" value="EF_HAND_2"/>
    <property type="match status" value="1"/>
</dbReference>
<dbReference type="PROSITE" id="PS50003">
    <property type="entry name" value="PH_DOMAIN"/>
    <property type="match status" value="2"/>
</dbReference>
<dbReference type="PROSITE" id="PS50007">
    <property type="entry name" value="PIPLC_X_DOMAIN"/>
    <property type="match status" value="1"/>
</dbReference>
<dbReference type="PROSITE" id="PS50008">
    <property type="entry name" value="PIPLC_Y_DOMAIN"/>
    <property type="match status" value="1"/>
</dbReference>
<dbReference type="PROSITE" id="PS50001">
    <property type="entry name" value="SH2"/>
    <property type="match status" value="2"/>
</dbReference>
<dbReference type="PROSITE" id="PS50002">
    <property type="entry name" value="SH3"/>
    <property type="match status" value="1"/>
</dbReference>
<gene>
    <name evidence="17" type="primary">Plcg1</name>
</gene>